<organism>
    <name type="scientific">Arabidopsis thaliana</name>
    <name type="common">Mouse-ear cress</name>
    <dbReference type="NCBI Taxonomy" id="3702"/>
    <lineage>
        <taxon>Eukaryota</taxon>
        <taxon>Viridiplantae</taxon>
        <taxon>Streptophyta</taxon>
        <taxon>Embryophyta</taxon>
        <taxon>Tracheophyta</taxon>
        <taxon>Spermatophyta</taxon>
        <taxon>Magnoliopsida</taxon>
        <taxon>eudicotyledons</taxon>
        <taxon>Gunneridae</taxon>
        <taxon>Pentapetalae</taxon>
        <taxon>rosids</taxon>
        <taxon>malvids</taxon>
        <taxon>Brassicales</taxon>
        <taxon>Brassicaceae</taxon>
        <taxon>Camelineae</taxon>
        <taxon>Arabidopsis</taxon>
    </lineage>
</organism>
<dbReference type="EC" id="2.7.11.1" evidence="6"/>
<dbReference type="EMBL" id="AB016874">
    <property type="protein sequence ID" value="BAB08823.1"/>
    <property type="status" value="ALT_SEQ"/>
    <property type="molecule type" value="Genomic_DNA"/>
</dbReference>
<dbReference type="EMBL" id="CP002688">
    <property type="protein sequence ID" value="AED95148.1"/>
    <property type="molecule type" value="Genomic_DNA"/>
</dbReference>
<dbReference type="RefSeq" id="NP_199283.1">
    <molecule id="Q9FIZ3-1"/>
    <property type="nucleotide sequence ID" value="NM_123837.3"/>
</dbReference>
<dbReference type="SMR" id="Q9FIZ3"/>
<dbReference type="BioGRID" id="19749">
    <property type="interactions" value="7"/>
</dbReference>
<dbReference type="FunCoup" id="Q9FIZ3">
    <property type="interactions" value="99"/>
</dbReference>
<dbReference type="STRING" id="3702.Q9FIZ3"/>
<dbReference type="GlyCosmos" id="Q9FIZ3">
    <property type="glycosylation" value="19 sites, No reported glycans"/>
</dbReference>
<dbReference type="GlyGen" id="Q9FIZ3">
    <property type="glycosylation" value="19 sites"/>
</dbReference>
<dbReference type="PaxDb" id="3702-AT5G44700.1"/>
<dbReference type="ProteomicsDB" id="247183">
    <molecule id="Q9FIZ3-1"/>
</dbReference>
<dbReference type="EnsemblPlants" id="AT5G44700.1">
    <molecule id="Q9FIZ3-1"/>
    <property type="protein sequence ID" value="AT5G44700.1"/>
    <property type="gene ID" value="AT5G44700"/>
</dbReference>
<dbReference type="GeneID" id="834499"/>
<dbReference type="Gramene" id="AT5G44700.1">
    <molecule id="Q9FIZ3-1"/>
    <property type="protein sequence ID" value="AT5G44700.1"/>
    <property type="gene ID" value="AT5G44700"/>
</dbReference>
<dbReference type="KEGG" id="ath:AT5G44700"/>
<dbReference type="Araport" id="AT5G44700"/>
<dbReference type="TAIR" id="AT5G44700">
    <property type="gene designation" value="GSO2"/>
</dbReference>
<dbReference type="eggNOG" id="ENOG502QRD1">
    <property type="taxonomic scope" value="Eukaryota"/>
</dbReference>
<dbReference type="HOGENOM" id="CLU_000288_22_1_1"/>
<dbReference type="InParanoid" id="Q9FIZ3"/>
<dbReference type="OMA" id="VWDWLHA"/>
<dbReference type="PhylomeDB" id="Q9FIZ3"/>
<dbReference type="PRO" id="PR:Q9FIZ3"/>
<dbReference type="Proteomes" id="UP000006548">
    <property type="component" value="Chromosome 5"/>
</dbReference>
<dbReference type="ExpressionAtlas" id="Q9FIZ3">
    <property type="expression patterns" value="baseline and differential"/>
</dbReference>
<dbReference type="GO" id="GO:0048226">
    <property type="term" value="C:Casparian strip"/>
    <property type="evidence" value="ECO:0000315"/>
    <property type="project" value="UniProtKB"/>
</dbReference>
<dbReference type="GO" id="GO:0005886">
    <property type="term" value="C:plasma membrane"/>
    <property type="evidence" value="ECO:0007669"/>
    <property type="project" value="UniProtKB-SubCell"/>
</dbReference>
<dbReference type="GO" id="GO:0005524">
    <property type="term" value="F:ATP binding"/>
    <property type="evidence" value="ECO:0007669"/>
    <property type="project" value="UniProtKB-KW"/>
</dbReference>
<dbReference type="GO" id="GO:0106310">
    <property type="term" value="F:protein serine kinase activity"/>
    <property type="evidence" value="ECO:0007669"/>
    <property type="project" value="RHEA"/>
</dbReference>
<dbReference type="GO" id="GO:0004674">
    <property type="term" value="F:protein serine/threonine kinase activity"/>
    <property type="evidence" value="ECO:0007669"/>
    <property type="project" value="UniProtKB-KW"/>
</dbReference>
<dbReference type="GO" id="GO:0160073">
    <property type="term" value="P:Casparian strip assembly"/>
    <property type="evidence" value="ECO:0000315"/>
    <property type="project" value="UniProtKB"/>
</dbReference>
<dbReference type="GO" id="GO:0009553">
    <property type="term" value="P:embryo sac development"/>
    <property type="evidence" value="ECO:0000315"/>
    <property type="project" value="TAIR"/>
</dbReference>
<dbReference type="GO" id="GO:0051302">
    <property type="term" value="P:regulation of cell division"/>
    <property type="evidence" value="ECO:0000315"/>
    <property type="project" value="UniProtKB"/>
</dbReference>
<dbReference type="GO" id="GO:0042659">
    <property type="term" value="P:regulation of cell fate specification"/>
    <property type="evidence" value="ECO:0000315"/>
    <property type="project" value="UniProtKB"/>
</dbReference>
<dbReference type="GO" id="GO:2000280">
    <property type="term" value="P:regulation of root development"/>
    <property type="evidence" value="ECO:0000315"/>
    <property type="project" value="UniProtKB"/>
</dbReference>
<dbReference type="GO" id="GO:2000067">
    <property type="term" value="P:regulation of root morphogenesis"/>
    <property type="evidence" value="ECO:0000315"/>
    <property type="project" value="UniProtKB"/>
</dbReference>
<dbReference type="GO" id="GO:0090708">
    <property type="term" value="P:specification of plant organ axis polarity"/>
    <property type="evidence" value="ECO:0000315"/>
    <property type="project" value="UniProtKB"/>
</dbReference>
<dbReference type="CDD" id="cd14066">
    <property type="entry name" value="STKc_IRAK"/>
    <property type="match status" value="1"/>
</dbReference>
<dbReference type="FunFam" id="1.10.510.10:FF:000417">
    <property type="entry name" value="Leucine-rich repeat receptor-like protein kinase"/>
    <property type="match status" value="1"/>
</dbReference>
<dbReference type="FunFam" id="3.80.10.10:FF:000221">
    <property type="entry name" value="Leucine-rich repeat receptor-like protein kinase PXL1"/>
    <property type="match status" value="1"/>
</dbReference>
<dbReference type="FunFam" id="3.80.10.10:FF:000544">
    <property type="entry name" value="Leucine-rich repeat receptor-like serine/threonine-protein kinase BAM3"/>
    <property type="match status" value="1"/>
</dbReference>
<dbReference type="FunFam" id="3.80.10.10:FF:000101">
    <property type="entry name" value="LRR receptor-like serine/threonine-protein kinase ERECTA"/>
    <property type="match status" value="1"/>
</dbReference>
<dbReference type="FunFam" id="3.30.200.20:FF:000687">
    <property type="entry name" value="LRR receptor-like serine/threonine-protein kinase GSO1"/>
    <property type="match status" value="1"/>
</dbReference>
<dbReference type="FunFam" id="3.80.10.10:FF:000095">
    <property type="entry name" value="LRR receptor-like serine/threonine-protein kinase GSO1"/>
    <property type="match status" value="1"/>
</dbReference>
<dbReference type="FunFam" id="3.80.10.10:FF:000683">
    <property type="entry name" value="LRR receptor-like serine/threonine-protein kinase GSO1"/>
    <property type="match status" value="1"/>
</dbReference>
<dbReference type="FunFam" id="3.80.10.10:FF:001033">
    <property type="entry name" value="LRR receptor-like serine/threonine-protein kinase GSO1"/>
    <property type="match status" value="1"/>
</dbReference>
<dbReference type="Gene3D" id="3.30.200.20">
    <property type="entry name" value="Phosphorylase Kinase, domain 1"/>
    <property type="match status" value="1"/>
</dbReference>
<dbReference type="Gene3D" id="3.80.10.10">
    <property type="entry name" value="Ribonuclease Inhibitor"/>
    <property type="match status" value="5"/>
</dbReference>
<dbReference type="Gene3D" id="1.10.510.10">
    <property type="entry name" value="Transferase(Phosphotransferase) domain 1"/>
    <property type="match status" value="1"/>
</dbReference>
<dbReference type="InterPro" id="IPR011009">
    <property type="entry name" value="Kinase-like_dom_sf"/>
</dbReference>
<dbReference type="InterPro" id="IPR001611">
    <property type="entry name" value="Leu-rich_rpt"/>
</dbReference>
<dbReference type="InterPro" id="IPR003591">
    <property type="entry name" value="Leu-rich_rpt_typical-subtyp"/>
</dbReference>
<dbReference type="InterPro" id="IPR032675">
    <property type="entry name" value="LRR_dom_sf"/>
</dbReference>
<dbReference type="InterPro" id="IPR013210">
    <property type="entry name" value="LRR_N_plant-typ"/>
</dbReference>
<dbReference type="InterPro" id="IPR051716">
    <property type="entry name" value="Plant_RL_S/T_kinase"/>
</dbReference>
<dbReference type="InterPro" id="IPR000719">
    <property type="entry name" value="Prot_kinase_dom"/>
</dbReference>
<dbReference type="InterPro" id="IPR017441">
    <property type="entry name" value="Protein_kinase_ATP_BS"/>
</dbReference>
<dbReference type="InterPro" id="IPR008271">
    <property type="entry name" value="Ser/Thr_kinase_AS"/>
</dbReference>
<dbReference type="PANTHER" id="PTHR48053">
    <property type="entry name" value="LEUCINE RICH REPEAT FAMILY PROTEIN, EXPRESSED"/>
    <property type="match status" value="1"/>
</dbReference>
<dbReference type="PANTHER" id="PTHR48053:SF118">
    <property type="entry name" value="OS07G0498400 PROTEIN"/>
    <property type="match status" value="1"/>
</dbReference>
<dbReference type="Pfam" id="PF00560">
    <property type="entry name" value="LRR_1"/>
    <property type="match status" value="7"/>
</dbReference>
<dbReference type="Pfam" id="PF13855">
    <property type="entry name" value="LRR_8"/>
    <property type="match status" value="4"/>
</dbReference>
<dbReference type="Pfam" id="PF08263">
    <property type="entry name" value="LRRNT_2"/>
    <property type="match status" value="1"/>
</dbReference>
<dbReference type="Pfam" id="PF00069">
    <property type="entry name" value="Pkinase"/>
    <property type="match status" value="1"/>
</dbReference>
<dbReference type="PRINTS" id="PR00019">
    <property type="entry name" value="LEURICHRPT"/>
</dbReference>
<dbReference type="SMART" id="SM00365">
    <property type="entry name" value="LRR_SD22"/>
    <property type="match status" value="5"/>
</dbReference>
<dbReference type="SMART" id="SM00369">
    <property type="entry name" value="LRR_TYP"/>
    <property type="match status" value="12"/>
</dbReference>
<dbReference type="SMART" id="SM00220">
    <property type="entry name" value="S_TKc"/>
    <property type="match status" value="1"/>
</dbReference>
<dbReference type="SUPFAM" id="SSF52058">
    <property type="entry name" value="L domain-like"/>
    <property type="match status" value="2"/>
</dbReference>
<dbReference type="SUPFAM" id="SSF56112">
    <property type="entry name" value="Protein kinase-like (PK-like)"/>
    <property type="match status" value="1"/>
</dbReference>
<dbReference type="SUPFAM" id="SSF52047">
    <property type="entry name" value="RNI-like"/>
    <property type="match status" value="1"/>
</dbReference>
<dbReference type="PROSITE" id="PS51450">
    <property type="entry name" value="LRR"/>
    <property type="match status" value="22"/>
</dbReference>
<dbReference type="PROSITE" id="PS00107">
    <property type="entry name" value="PROTEIN_KINASE_ATP"/>
    <property type="match status" value="1"/>
</dbReference>
<dbReference type="PROSITE" id="PS50011">
    <property type="entry name" value="PROTEIN_KINASE_DOM"/>
    <property type="match status" value="1"/>
</dbReference>
<dbReference type="PROSITE" id="PS00108">
    <property type="entry name" value="PROTEIN_KINASE_ST"/>
    <property type="match status" value="1"/>
</dbReference>
<reference key="1">
    <citation type="journal article" date="1998" name="DNA Res.">
        <title>Structural analysis of Arabidopsis thaliana chromosome 5. VIII. Sequence features of the regions of 1,081,958 bp covered by seventeen physically assigned P1 and TAC clones.</title>
        <authorList>
            <person name="Asamizu E."/>
            <person name="Sato S."/>
            <person name="Kaneko T."/>
            <person name="Nakamura Y."/>
            <person name="Kotani H."/>
            <person name="Miyajima N."/>
            <person name="Tabata S."/>
        </authorList>
    </citation>
    <scope>NUCLEOTIDE SEQUENCE [LARGE SCALE GENOMIC DNA]</scope>
    <source>
        <strain>cv. Columbia</strain>
    </source>
</reference>
<reference key="2">
    <citation type="journal article" date="2017" name="Plant J.">
        <title>Araport11: a complete reannotation of the Arabidopsis thaliana reference genome.</title>
        <authorList>
            <person name="Cheng C.Y."/>
            <person name="Krishnakumar V."/>
            <person name="Chan A.P."/>
            <person name="Thibaud-Nissen F."/>
            <person name="Schobel S."/>
            <person name="Town C.D."/>
        </authorList>
    </citation>
    <scope>GENOME REANNOTATION</scope>
    <source>
        <strain>cv. Columbia</strain>
    </source>
</reference>
<reference key="3">
    <citation type="journal article" date="2005" name="Development">
        <title>Genetic and molecular identification of genes required for female gametophyte development and function in Arabidopsis.</title>
        <authorList>
            <person name="Pagnussat G.C."/>
            <person name="Yu H.-J."/>
            <person name="Ngo Q.A."/>
            <person name="Rajani S."/>
            <person name="Mayalagu S."/>
            <person name="Johnson C.S."/>
            <person name="Capron A."/>
            <person name="Xie L.-F."/>
            <person name="Ye D."/>
            <person name="Sundaresan V."/>
        </authorList>
    </citation>
    <scope>FUNCTION</scope>
    <scope>DISRUPTION PHENOTYPE</scope>
</reference>
<reference key="4">
    <citation type="journal article" date="2008" name="Plant J.">
        <title>GASSHO1 and GASSHO2 encoding a putative leucine-rich repeat transmembrane-type receptor kinase are essential for the normal development of the epidermal surface in Arabidopsis embryos.</title>
        <authorList>
            <person name="Tsuwamoto R."/>
            <person name="Fukuoka H."/>
            <person name="Takahata Y."/>
        </authorList>
    </citation>
    <scope>FUNCTION</scope>
    <scope>DISRUPTION PHENOTYPE</scope>
    <scope>DEVELOPMENTAL STAGE</scope>
    <scope>TISSUE SPECIFICITY</scope>
</reference>
<reference key="5">
    <citation type="journal article" date="2014" name="Dev. Dyn.">
        <title>The receptor-like kinases GSO1 and GSO2 together regulate root growth in Arabidopsis through control of cell division and cell fate specification.</title>
        <authorList>
            <person name="Racolta A."/>
            <person name="Bryan A.C."/>
            <person name="Tax F.E."/>
        </authorList>
    </citation>
    <scope>FUNCTION</scope>
    <scope>DISRUPTION PHENOTYPE</scope>
    <scope>DEVELOPMENTAL STAGE</scope>
    <source>
        <strain>cv. Columbia</strain>
    </source>
</reference>
<reference key="6">
    <citation type="journal article" date="2017" name="Science">
        <title>A peptide hormone required for Casparian strip diffusion barrier formation in Arabidopsis roots.</title>
        <authorList>
            <person name="Nakayama T."/>
            <person name="Shinohara H."/>
            <person name="Tanaka M."/>
            <person name="Baba K."/>
            <person name="Ogawa-Ohnishi M."/>
            <person name="Matsubayashi Y."/>
        </authorList>
    </citation>
    <scope>FUNCTION</scope>
    <scope>DISRUPTION PHENOTYPE</scope>
    <scope>INTERACTION WITH CIF1 AND CIF2</scope>
</reference>
<protein>
    <recommendedName>
        <fullName evidence="13">LRR receptor-like serine/threonine-protein kinase GSO2</fullName>
        <ecNumber evidence="6">2.7.11.1</ecNumber>
    </recommendedName>
    <alternativeName>
        <fullName evidence="12">Protein EMBRYO SAC DEVELOPMENT ARREST 23</fullName>
    </alternativeName>
    <alternativeName>
        <fullName evidence="13">Protein GASSHO 2</fullName>
    </alternativeName>
</protein>
<proteinExistence type="evidence at protein level"/>
<evidence type="ECO:0000250" key="1">
    <source>
        <dbReference type="UniProtKB" id="C0LGQ5"/>
    </source>
</evidence>
<evidence type="ECO:0000250" key="2">
    <source>
        <dbReference type="UniProtKB" id="C0LGT6"/>
    </source>
</evidence>
<evidence type="ECO:0000250" key="3">
    <source>
        <dbReference type="UniProtKB" id="O22476"/>
    </source>
</evidence>
<evidence type="ECO:0000250" key="4">
    <source>
        <dbReference type="UniProtKB" id="Q9M0G7"/>
    </source>
</evidence>
<evidence type="ECO:0000255" key="5"/>
<evidence type="ECO:0000255" key="6">
    <source>
        <dbReference type="PROSITE-ProRule" id="PRU00159"/>
    </source>
</evidence>
<evidence type="ECO:0000255" key="7">
    <source>
        <dbReference type="PROSITE-ProRule" id="PRU00498"/>
    </source>
</evidence>
<evidence type="ECO:0000269" key="8">
    <source>
    </source>
</evidence>
<evidence type="ECO:0000269" key="9">
    <source>
    </source>
</evidence>
<evidence type="ECO:0000269" key="10">
    <source>
    </source>
</evidence>
<evidence type="ECO:0000269" key="11">
    <source>
    </source>
</evidence>
<evidence type="ECO:0000303" key="12">
    <source>
    </source>
</evidence>
<evidence type="ECO:0000303" key="13">
    <source>
    </source>
</evidence>
<evidence type="ECO:0000305" key="14"/>
<evidence type="ECO:0000312" key="15">
    <source>
        <dbReference type="Araport" id="AT5G44700"/>
    </source>
</evidence>
<evidence type="ECO:0000312" key="16">
    <source>
        <dbReference type="EMBL" id="BAB08823.1"/>
    </source>
</evidence>
<keyword id="KW-0025">Alternative splicing</keyword>
<keyword id="KW-0067">ATP-binding</keyword>
<keyword id="KW-1003">Cell membrane</keyword>
<keyword id="KW-0961">Cell wall biogenesis/degradation</keyword>
<keyword id="KW-0217">Developmental protein</keyword>
<keyword id="KW-0325">Glycoprotein</keyword>
<keyword id="KW-0418">Kinase</keyword>
<keyword id="KW-0433">Leucine-rich repeat</keyword>
<keyword id="KW-0472">Membrane</keyword>
<keyword id="KW-0547">Nucleotide-binding</keyword>
<keyword id="KW-0597">Phosphoprotein</keyword>
<keyword id="KW-0675">Receptor</keyword>
<keyword id="KW-1185">Reference proteome</keyword>
<keyword id="KW-0677">Repeat</keyword>
<keyword id="KW-0723">Serine/threonine-protein kinase</keyword>
<keyword id="KW-0732">Signal</keyword>
<keyword id="KW-0808">Transferase</keyword>
<keyword id="KW-0812">Transmembrane</keyword>
<keyword id="KW-1133">Transmembrane helix</keyword>
<feature type="signal peptide" evidence="5">
    <location>
        <begin position="1"/>
        <end position="22"/>
    </location>
</feature>
<feature type="chain" id="PRO_0000387514" description="LRR receptor-like serine/threonine-protein kinase GSO2">
    <location>
        <begin position="23"/>
        <end position="1252"/>
    </location>
</feature>
<feature type="topological domain" description="Extracellular" evidence="5">
    <location>
        <begin position="23"/>
        <end position="876"/>
    </location>
</feature>
<feature type="transmembrane region" description="Helical" evidence="5">
    <location>
        <begin position="877"/>
        <end position="897"/>
    </location>
</feature>
<feature type="topological domain" description="Cytoplasmic" evidence="5">
    <location>
        <begin position="898"/>
        <end position="1252"/>
    </location>
</feature>
<feature type="repeat" description="LRR 1" evidence="5">
    <location>
        <begin position="94"/>
        <end position="118"/>
    </location>
</feature>
<feature type="repeat" description="LRR 2" evidence="5">
    <location>
        <begin position="120"/>
        <end position="143"/>
    </location>
</feature>
<feature type="repeat" description="LRR 3" evidence="5">
    <location>
        <begin position="144"/>
        <end position="166"/>
    </location>
</feature>
<feature type="repeat" description="LRR 4" evidence="5">
    <location>
        <begin position="168"/>
        <end position="190"/>
    </location>
</feature>
<feature type="repeat" description="LRR 5" evidence="5">
    <location>
        <begin position="191"/>
        <end position="215"/>
    </location>
</feature>
<feature type="repeat" description="LRR 6" evidence="5">
    <location>
        <begin position="217"/>
        <end position="239"/>
    </location>
</feature>
<feature type="repeat" description="LRR 7" evidence="5">
    <location>
        <begin position="240"/>
        <end position="263"/>
    </location>
</feature>
<feature type="repeat" description="LRR 8" evidence="5">
    <location>
        <begin position="265"/>
        <end position="286"/>
    </location>
</feature>
<feature type="repeat" description="LRR 9" evidence="5">
    <location>
        <begin position="287"/>
        <end position="310"/>
    </location>
</feature>
<feature type="repeat" description="LRR 10" evidence="5">
    <location>
        <begin position="312"/>
        <end position="335"/>
    </location>
</feature>
<feature type="repeat" description="LRR 11" evidence="5">
    <location>
        <begin position="337"/>
        <end position="360"/>
    </location>
</feature>
<feature type="repeat" description="LRR 12" evidence="5">
    <location>
        <begin position="361"/>
        <end position="384"/>
    </location>
</feature>
<feature type="repeat" description="LRR 13" evidence="5">
    <location>
        <begin position="386"/>
        <end position="408"/>
    </location>
</feature>
<feature type="repeat" description="LRR 14" evidence="5">
    <location>
        <begin position="409"/>
        <end position="433"/>
    </location>
</feature>
<feature type="repeat" description="LRR 15" evidence="5">
    <location>
        <begin position="435"/>
        <end position="456"/>
    </location>
</feature>
<feature type="repeat" description="LRR 16" evidence="5">
    <location>
        <begin position="457"/>
        <end position="480"/>
    </location>
</feature>
<feature type="repeat" description="LRR 17" evidence="5">
    <location>
        <begin position="481"/>
        <end position="504"/>
    </location>
</feature>
<feature type="repeat" description="LRR 18" evidence="5">
    <location>
        <begin position="506"/>
        <end position="528"/>
    </location>
</feature>
<feature type="repeat" description="LRR 19" evidence="5">
    <location>
        <begin position="529"/>
        <end position="552"/>
    </location>
</feature>
<feature type="repeat" description="LRR 20" evidence="5">
    <location>
        <begin position="554"/>
        <end position="575"/>
    </location>
</feature>
<feature type="repeat" description="LRR 21" evidence="5">
    <location>
        <begin position="577"/>
        <end position="599"/>
    </location>
</feature>
<feature type="repeat" description="LRR 22" evidence="5">
    <location>
        <begin position="600"/>
        <end position="622"/>
    </location>
</feature>
<feature type="repeat" description="LRR 23" evidence="5">
    <location>
        <begin position="623"/>
        <end position="648"/>
    </location>
</feature>
<feature type="repeat" description="LRR 24" evidence="5">
    <location>
        <begin position="650"/>
        <end position="670"/>
    </location>
</feature>
<feature type="repeat" description="LRR 25" evidence="5">
    <location>
        <begin position="671"/>
        <end position="695"/>
    </location>
</feature>
<feature type="repeat" description="LRR 26" evidence="5">
    <location>
        <begin position="697"/>
        <end position="719"/>
    </location>
</feature>
<feature type="repeat" description="LRR 27" evidence="5">
    <location>
        <begin position="720"/>
        <end position="743"/>
    </location>
</feature>
<feature type="repeat" description="LRR 28" evidence="5">
    <location>
        <begin position="745"/>
        <end position="767"/>
    </location>
</feature>
<feature type="repeat" description="LRR 29" evidence="5">
    <location>
        <begin position="768"/>
        <end position="792"/>
    </location>
</feature>
<feature type="repeat" description="LRR 30" evidence="5">
    <location>
        <begin position="793"/>
        <end position="816"/>
    </location>
</feature>
<feature type="repeat" description="LRR 31" evidence="5">
    <location>
        <begin position="818"/>
        <end position="839"/>
    </location>
</feature>
<feature type="domain" description="Protein kinase" evidence="6">
    <location>
        <begin position="948"/>
        <end position="1232"/>
    </location>
</feature>
<feature type="active site" description="Proton acceptor" evidence="6">
    <location>
        <position position="1079"/>
    </location>
</feature>
<feature type="binding site" evidence="6">
    <location>
        <begin position="954"/>
        <end position="962"/>
    </location>
    <ligand>
        <name>ATP</name>
        <dbReference type="ChEBI" id="CHEBI:30616"/>
    </ligand>
</feature>
<feature type="binding site" evidence="6">
    <location>
        <position position="976"/>
    </location>
    <ligand>
        <name>ATP</name>
        <dbReference type="ChEBI" id="CHEBI:30616"/>
    </ligand>
</feature>
<feature type="modified residue" description="Phosphothreonine" evidence="3">
    <location>
        <position position="945"/>
    </location>
</feature>
<feature type="modified residue" description="Phosphotyrosine" evidence="3">
    <location>
        <position position="1024"/>
    </location>
</feature>
<feature type="modified residue" description="Phosphotyrosine" evidence="2">
    <location>
        <position position="1066"/>
    </location>
</feature>
<feature type="modified residue" description="Phosphoserine" evidence="4">
    <location>
        <position position="1114"/>
    </location>
</feature>
<feature type="modified residue" description="Phosphotyrosine" evidence="2">
    <location>
        <position position="1124"/>
    </location>
</feature>
<feature type="modified residue" description="Phosphotyrosine" evidence="4">
    <location>
        <position position="1131"/>
    </location>
</feature>
<feature type="glycosylation site" description="N-linked (GlcNAc...) asparagine" evidence="7">
    <location>
        <position position="62"/>
    </location>
</feature>
<feature type="glycosylation site" description="N-linked (GlcNAc...) asparagine" evidence="7">
    <location>
        <position position="77"/>
    </location>
</feature>
<feature type="glycosylation site" description="N-linked (GlcNAc...) asparagine" evidence="7">
    <location>
        <position position="117"/>
    </location>
</feature>
<feature type="glycosylation site" description="N-linked (GlcNAc...) asparagine" evidence="7">
    <location>
        <position position="157"/>
    </location>
</feature>
<feature type="glycosylation site" description="N-linked (GlcNAc...) asparagine" evidence="7">
    <location>
        <position position="214"/>
    </location>
</feature>
<feature type="glycosylation site" description="N-linked (GlcNAc...) asparagine" evidence="7">
    <location>
        <position position="229"/>
    </location>
</feature>
<feature type="glycosylation site" description="N-linked (GlcNAc...) asparagine" evidence="7">
    <location>
        <position position="299"/>
    </location>
</feature>
<feature type="glycosylation site" description="N-linked (GlcNAc...) asparagine" evidence="7">
    <location>
        <position position="336"/>
    </location>
</feature>
<feature type="glycosylation site" description="N-linked (GlcNAc...) asparagine" evidence="7">
    <location>
        <position position="370"/>
    </location>
</feature>
<feature type="glycosylation site" description="N-linked (GlcNAc...) asparagine" evidence="7">
    <location>
        <position position="394"/>
    </location>
</feature>
<feature type="glycosylation site" description="N-linked (GlcNAc...) asparagine" evidence="7">
    <location>
        <position position="407"/>
    </location>
</feature>
<feature type="glycosylation site" description="N-linked (GlcNAc...) asparagine" evidence="7">
    <location>
        <position position="455"/>
    </location>
</feature>
<feature type="glycosylation site" description="N-linked (GlcNAc...) asparagine" evidence="7">
    <location>
        <position position="538"/>
    </location>
</feature>
<feature type="glycosylation site" description="N-linked (GlcNAc...) asparagine" evidence="7">
    <location>
        <position position="554"/>
    </location>
</feature>
<feature type="glycosylation site" description="N-linked (GlcNAc...) asparagine" evidence="7">
    <location>
        <position position="559"/>
    </location>
</feature>
<feature type="glycosylation site" description="N-linked (GlcNAc...) asparagine" evidence="7">
    <location>
        <position position="566"/>
    </location>
</feature>
<feature type="glycosylation site" description="N-linked (GlcNAc...) asparagine" evidence="7">
    <location>
        <position position="709"/>
    </location>
</feature>
<feature type="glycosylation site" description="N-linked (GlcNAc...) asparagine" evidence="7">
    <location>
        <position position="780"/>
    </location>
</feature>
<feature type="glycosylation site" description="N-linked (GlcNAc...) asparagine" evidence="7">
    <location>
        <position position="823"/>
    </location>
</feature>
<sequence>MQQNSVLLALFFLCFSSGLGSGQPGQRDDLQTLLELKNSFITNPKEEDVLRDWNSGSPSYCNWTGVTCGGREIIGLNLSGLGLTGSISPSIGRFNNLIHIDLSSNRLVGPIPTTLSNLSSSLESLHLFSNLLSGDIPSQLGSLVNLKSLKLGDNELNGTIPETFGNLVNLQMLALASCRLTGLIPSRFGRLVQLQTLILQDNELEGPIPAEIGNCTSLALFAAAFNRLNGSLPAELNRLKNLQTLNLGDNSFSGEIPSQLGDLVSIQYLNLIGNQLQGLIPKRLTELANLQTLDLSSNNLTGVIHEEFWRMNQLEFLVLAKNRLSGSLPKTICSNNTSLKQLFLSETQLSGEIPAEISNCQSLKLLDLSNNTLTGQIPDSLFQLVELTNLYLNNNSLEGTLSSSISNLTNLQEFTLYHNNLEGKVPKEIGFLGKLEIMYLYENRFSGEMPVEIGNCTRLQEIDWYGNRLSGEIPSSIGRLKDLTRLHLRENELVGNIPASLGNCHQMTVIDLADNQLSGSIPSSFGFLTALELFMIYNNSLQGNLPDSLINLKNLTRINFSSNKFNGSISPLCGSSSYLSFDVTENGFEGDIPLELGKSTNLDRLRLGKNQFTGRIPRTFGKISELSLLDISRNSLSGIIPVELGLCKKLTHIDLNNNYLSGVIPTWLGKLPLLGELKLSSNKFVGSLPTEIFSLTNILTLFLDGNSLNGSIPQEIGNLQALNALNLEENQLSGPLPSTIGKLSKLFELRLSRNALTGEIPVEIGQLQDLQSALDLSYNNFTGRIPSTISTLPKLESLDLSHNQLVGEVPGQIGDMKSLGYLNLSYNNLEGKLKKQFSRWQADAFVGNAGLCGSPLSHCNRAGSKNQRSLSPKTVVIISAISSLAAIALMVLVIILFFKQNHDLFKKVRGGNSAFSSNSSSSQAPLFSNGGAKSDIKWDDIMEATHYLNEEFMIGSGGSGKVYKAELKNGETIAVKKILWKDDLMSNKSFNREVKTLGTIRHRHLVKLMGYCSSKADGLNLLIYEYMANGSVWDWLHANENTKKKEVLGWETRLKIALGLAQGVEYLHYDCVPPIVHRDIKSSNVLLDSNIEAHLGDFGLAKILTGNYDTNTESNTMFAGSYGYIAPEYAYSLKATEKSDVYSMGIVLMEIVTGKMPTEAMFDEETDMVRWVETVLDTPPGSEAREKLIDSELKSLLPCEEEAAYQVLEIALQCTKSYPQERPSSRQASEYLLNVFNNRAASYREMQTDTDK</sequence>
<gene>
    <name evidence="13" type="primary">GSO2</name>
    <name evidence="12" type="synonym">EDA23</name>
    <name evidence="15" type="ordered locus">At5g44700</name>
    <name evidence="16" type="ORF">K23L20.3</name>
</gene>
<accession>Q9FIZ3</accession>
<comment type="function">
    <text evidence="8 9 10 11">Together with GSO1, receptor-like serine/threonine-kinase required during the development of the epidermal surface in embryos and cotyledons. Involved in the nuclear division phase of megagametogenesis. In coordination with GSO2, regulates root growth through control of cell division and cell fate specification. Controls seedling root growth by modulating sucrose response after germination (PubMed:24123341). Receptor of the peptide hormones CIF1 and CIF2 required for contiguous Casparian strip diffusion barrier formation in roots (PubMed:28104889).</text>
</comment>
<comment type="catalytic activity">
    <reaction evidence="6">
        <text>L-seryl-[protein] + ATP = O-phospho-L-seryl-[protein] + ADP + H(+)</text>
        <dbReference type="Rhea" id="RHEA:17989"/>
        <dbReference type="Rhea" id="RHEA-COMP:9863"/>
        <dbReference type="Rhea" id="RHEA-COMP:11604"/>
        <dbReference type="ChEBI" id="CHEBI:15378"/>
        <dbReference type="ChEBI" id="CHEBI:29999"/>
        <dbReference type="ChEBI" id="CHEBI:30616"/>
        <dbReference type="ChEBI" id="CHEBI:83421"/>
        <dbReference type="ChEBI" id="CHEBI:456216"/>
        <dbReference type="EC" id="2.7.11.1"/>
    </reaction>
</comment>
<comment type="catalytic activity">
    <reaction evidence="6">
        <text>L-threonyl-[protein] + ATP = O-phospho-L-threonyl-[protein] + ADP + H(+)</text>
        <dbReference type="Rhea" id="RHEA:46608"/>
        <dbReference type="Rhea" id="RHEA-COMP:11060"/>
        <dbReference type="Rhea" id="RHEA-COMP:11605"/>
        <dbReference type="ChEBI" id="CHEBI:15378"/>
        <dbReference type="ChEBI" id="CHEBI:30013"/>
        <dbReference type="ChEBI" id="CHEBI:30616"/>
        <dbReference type="ChEBI" id="CHEBI:61977"/>
        <dbReference type="ChEBI" id="CHEBI:456216"/>
        <dbReference type="EC" id="2.7.11.1"/>
    </reaction>
</comment>
<comment type="subunit">
    <text evidence="11">Interacts with CIF1 and CIF2.</text>
</comment>
<comment type="subcellular location">
    <subcellularLocation>
        <location evidence="1">Cell membrane</location>
        <topology evidence="5">Single-pass type I membrane protein</topology>
    </subcellularLocation>
</comment>
<comment type="alternative products">
    <event type="alternative splicing"/>
    <isoform>
        <id>Q9FIZ3-1</id>
        <name>1</name>
        <sequence type="displayed"/>
    </isoform>
    <text>A number of isoforms are produced. According to EST sequences.</text>
</comment>
<comment type="tissue specificity">
    <text evidence="9">Mostly expressed in siliques, seeds, developing embryos and seedlings, detected in flower buds, but not in roots, leaves or stems.</text>
</comment>
<comment type="developmental stage">
    <text evidence="9 10">In flower buds, localized in pollen grains and the separation layer between the bud and the peduncle. During embryogenesis, uniform expression from the globular embryo to the mature cotyledonary embryo, except in the embryo suspensor. After germination, detected in whole cotyledons and in the hypocotyl. Detected in the aerial tissue of 1-3-day-old seedlings, and in the root epidermis and lateral root cap cells. Within the epidermis, mostly expressed in H cells during the first three days after germination (DAG) and becomes restricted to these H cells in mature roots. In the root apical meristem (RAM), mostly confined to the quiescent center (QC) by six DAG. Mostly observed in the outer layers of the mature root and the RAM, including the QC (PubMed:24123341).</text>
</comment>
<comment type="disruption phenotype">
    <text evidence="8 9 10 11">No visible phenotype during embryogenesis and seedling development. Arrested at two-nuclear stage and unfused polar nuclei. Gso1 and gso2 double mutants produce slightly contorted seeds, with abnormally shaped embryos and seedlings; adhesion between cotyledons and the peripheral tissue of the endosperm, short hypocotyl, and concave cotyledons sometimes fused, with compressed epidermal cells, endosperm tissue partially adherent to the surface of the cotyledons, and a rough surface. In addition, seedlings of gso1 gso2 have also root growth and patterning defects characterized by abnormal numbers of cells in longitudinal files and radial cell layers, as well as aberrant stem cell division planes. Root growth arrest and cell divisions defects are rescued by exogenous application of sucrose, but not patterning defects (PubMed:24123341). The double mutant gso1 gso2 exhibits a repeatedly interrupted, discontinuous Casparian strip due to patch-like localization of the CASPs proteins (PubMed:28104889).</text>
</comment>
<comment type="miscellaneous">
    <molecule>Isoform 1</molecule>
    <text>No experimental confirmation available.</text>
</comment>
<comment type="similarity">
    <text evidence="6">Belongs to the protein kinase superfamily. Ser/Thr protein kinase family.</text>
</comment>
<comment type="sequence caution" evidence="14">
    <conflict type="erroneous gene model prediction">
        <sequence resource="EMBL-CDS" id="BAB08823"/>
    </conflict>
</comment>
<name>GSO2_ARATH</name>